<organism>
    <name type="scientific">Macaca fascicularis</name>
    <name type="common">Crab-eating macaque</name>
    <name type="synonym">Cynomolgus monkey</name>
    <dbReference type="NCBI Taxonomy" id="9541"/>
    <lineage>
        <taxon>Eukaryota</taxon>
        <taxon>Metazoa</taxon>
        <taxon>Chordata</taxon>
        <taxon>Craniata</taxon>
        <taxon>Vertebrata</taxon>
        <taxon>Euteleostomi</taxon>
        <taxon>Mammalia</taxon>
        <taxon>Eutheria</taxon>
        <taxon>Euarchontoglires</taxon>
        <taxon>Primates</taxon>
        <taxon>Haplorrhini</taxon>
        <taxon>Catarrhini</taxon>
        <taxon>Cercopithecidae</taxon>
        <taxon>Cercopithecinae</taxon>
        <taxon>Macaca</taxon>
    </lineage>
</organism>
<sequence>MGKGCKVVVCGLLSVGKTAILEQLLYGNHTIGMEDCETMEDVYMASVETDRGVKEQLHLYDTRGLQEGVELPKHYFSFADGFVLVYSVNNLESFQRVELLKKEIDKFKDKKEVAIVVLGNKIDLSEQRQVDAEVAQQWAKSEKVRLWEVTVTDRKTLIEPFTLLASKLSQPQSKSSFPLPGRKNKGNSSSEN</sequence>
<evidence type="ECO:0000250" key="1"/>
<evidence type="ECO:0000256" key="2">
    <source>
        <dbReference type="SAM" id="MobiDB-lite"/>
    </source>
</evidence>
<evidence type="ECO:0000305" key="3"/>
<name>KBRS1_MACFA</name>
<dbReference type="EMBL" id="AB055252">
    <property type="protein sequence ID" value="BAB21876.1"/>
    <property type="molecule type" value="mRNA"/>
</dbReference>
<dbReference type="RefSeq" id="NP_001272051.1">
    <property type="nucleotide sequence ID" value="NM_001285122.1"/>
</dbReference>
<dbReference type="SMR" id="Q9BH04"/>
<dbReference type="STRING" id="9541.ENSMFAP00000004981"/>
<dbReference type="Ensembl" id="ENSMFAT00000023650.2">
    <property type="protein sequence ID" value="ENSMFAP00000004981.1"/>
    <property type="gene ID" value="ENSMFAG00000002166.2"/>
</dbReference>
<dbReference type="VEuPathDB" id="HostDB:ENSMFAG00000002166"/>
<dbReference type="eggNOG" id="KOG3883">
    <property type="taxonomic scope" value="Eukaryota"/>
</dbReference>
<dbReference type="GeneTree" id="ENSGT00940000159705"/>
<dbReference type="OMA" id="IANMHSR"/>
<dbReference type="OrthoDB" id="10002389at2759"/>
<dbReference type="Proteomes" id="UP000233100">
    <property type="component" value="Chromosome 2"/>
</dbReference>
<dbReference type="Bgee" id="ENSMFAG00000002166">
    <property type="expression patterns" value="Expressed in temporal lobe and 13 other cell types or tissues"/>
</dbReference>
<dbReference type="GO" id="GO:0005737">
    <property type="term" value="C:cytoplasm"/>
    <property type="evidence" value="ECO:0007669"/>
    <property type="project" value="UniProtKB-SubCell"/>
</dbReference>
<dbReference type="GO" id="GO:0005525">
    <property type="term" value="F:GTP binding"/>
    <property type="evidence" value="ECO:0007669"/>
    <property type="project" value="UniProtKB-KW"/>
</dbReference>
<dbReference type="GO" id="GO:0032794">
    <property type="term" value="F:GTPase activating protein binding"/>
    <property type="evidence" value="ECO:0007669"/>
    <property type="project" value="TreeGrafter"/>
</dbReference>
<dbReference type="GO" id="GO:0003924">
    <property type="term" value="F:GTPase activity"/>
    <property type="evidence" value="ECO:0007669"/>
    <property type="project" value="InterPro"/>
</dbReference>
<dbReference type="GO" id="GO:0043124">
    <property type="term" value="P:negative regulation of canonical NF-kappaB signal transduction"/>
    <property type="evidence" value="ECO:0007669"/>
    <property type="project" value="InterPro"/>
</dbReference>
<dbReference type="GO" id="GO:0032484">
    <property type="term" value="P:Ral protein signal transduction"/>
    <property type="evidence" value="ECO:0007669"/>
    <property type="project" value="TreeGrafter"/>
</dbReference>
<dbReference type="Gene3D" id="3.40.50.300">
    <property type="entry name" value="P-loop containing nucleotide triphosphate hydrolases"/>
    <property type="match status" value="1"/>
</dbReference>
<dbReference type="InterPro" id="IPR042227">
    <property type="entry name" value="KBRS"/>
</dbReference>
<dbReference type="InterPro" id="IPR027417">
    <property type="entry name" value="P-loop_NTPase"/>
</dbReference>
<dbReference type="InterPro" id="IPR005225">
    <property type="entry name" value="Small_GTP-bd"/>
</dbReference>
<dbReference type="InterPro" id="IPR001806">
    <property type="entry name" value="Small_GTPase"/>
</dbReference>
<dbReference type="NCBIfam" id="TIGR00231">
    <property type="entry name" value="small_GTP"/>
    <property type="match status" value="1"/>
</dbReference>
<dbReference type="PANTHER" id="PTHR46152">
    <property type="entry name" value="NF-KAPPA-B INHIBITOR-INTERACTING RAS-LIKE PROTEIN"/>
    <property type="match status" value="1"/>
</dbReference>
<dbReference type="PANTHER" id="PTHR46152:SF1">
    <property type="entry name" value="NF-KAPPA-B INHIBITOR-INTERACTING RAS-LIKE PROTEIN 1"/>
    <property type="match status" value="1"/>
</dbReference>
<dbReference type="Pfam" id="PF00071">
    <property type="entry name" value="Ras"/>
    <property type="match status" value="1"/>
</dbReference>
<dbReference type="PRINTS" id="PR00449">
    <property type="entry name" value="RASTRNSFRMNG"/>
</dbReference>
<dbReference type="SMART" id="SM00175">
    <property type="entry name" value="RAB"/>
    <property type="match status" value="1"/>
</dbReference>
<dbReference type="SMART" id="SM00173">
    <property type="entry name" value="RAS"/>
    <property type="match status" value="1"/>
</dbReference>
<dbReference type="SUPFAM" id="SSF52540">
    <property type="entry name" value="P-loop containing nucleoside triphosphate hydrolases"/>
    <property type="match status" value="1"/>
</dbReference>
<dbReference type="PROSITE" id="PS51419">
    <property type="entry name" value="RAB"/>
    <property type="match status" value="1"/>
</dbReference>
<feature type="chain" id="PRO_0000225676" description="NF-kappa-B inhibitor-interacting Ras-like protein 1">
    <location>
        <begin position="1"/>
        <end position="192"/>
    </location>
</feature>
<feature type="region of interest" description="Interactions with NFKBIA and NFKBIB" evidence="1">
    <location>
        <begin position="58"/>
        <end position="93"/>
    </location>
</feature>
<feature type="region of interest" description="Disordered" evidence="2">
    <location>
        <begin position="168"/>
        <end position="192"/>
    </location>
</feature>
<feature type="short sequence motif" description="Effector region">
    <location>
        <begin position="35"/>
        <end position="43"/>
    </location>
</feature>
<feature type="binding site" evidence="1">
    <location>
        <begin position="11"/>
        <end position="18"/>
    </location>
    <ligand>
        <name>GTP</name>
        <dbReference type="ChEBI" id="CHEBI:37565"/>
    </ligand>
</feature>
<feature type="binding site" evidence="1">
    <location>
        <begin position="61"/>
        <end position="65"/>
    </location>
    <ligand>
        <name>GTP</name>
        <dbReference type="ChEBI" id="CHEBI:37565"/>
    </ligand>
</feature>
<feature type="binding site" evidence="1">
    <location>
        <begin position="120"/>
        <end position="123"/>
    </location>
    <ligand>
        <name>GTP</name>
        <dbReference type="ChEBI" id="CHEBI:37565"/>
    </ligand>
</feature>
<comment type="function">
    <text evidence="1">Atypical Ras-like protein that acts as a potent regulator of NF-kappa-B activity by preventing the degradation of NF-kappa-B inhibitor beta (NFKBIB) by most signals, explaining why NFKBIB is more resistant to degradation. May act by blocking phosphorylation of NFKBIB and mediating cytoplasmic retention of p65/RELA NF-kappa-B subunit. It is unclear whether it acts as a GTPase. Both GTP- and GDP-bound forms block phosphorylation of NFKBIB (By similarity).</text>
</comment>
<comment type="subunit">
    <text evidence="1">Interacts with both NF-kappa-B inhibitor alpha (NFKBIA) and beta (NFKBIB) in vitro. However, it probably only interacts with NFKBIB in vivo. Forms a complex with NFKBIB and NF-kappa-B heterodimer (p50/NFKB1 and p65/RELA). Also interacts with c-Rel (REL) (By similarity).</text>
</comment>
<comment type="subcellular location">
    <subcellularLocation>
        <location evidence="1">Cytoplasm</location>
    </subcellularLocation>
</comment>
<comment type="domain">
    <text>In contrast to other members of the Ras family, the members of the KappaB-Ras subfamily do not contain the conserved Gly and Gln residues in positions 13 and 65, which are replaced by Leu residues, and are therefore similar to the constitutively active forms of oncogenic forms of Ras. This suggests that members of this family are clearly different from other small GTPases proteins.</text>
</comment>
<comment type="similarity">
    <text evidence="3">Belongs to the small GTPase superfamily. Ras family. KappaB-Ras subfamily.</text>
</comment>
<protein>
    <recommendedName>
        <fullName>NF-kappa-B inhibitor-interacting Ras-like protein 1</fullName>
    </recommendedName>
    <alternativeName>
        <fullName>I-kappa-B-interacting Ras-like protein 1</fullName>
        <shortName>Kappa B-Ras protein 1</shortName>
        <shortName>KappaB-Ras1</shortName>
    </alternativeName>
</protein>
<proteinExistence type="evidence at transcript level"/>
<accession>Q9BH04</accession>
<gene>
    <name type="primary">NKIRAS1</name>
    <name type="ORF">QflA-10220</name>
</gene>
<keyword id="KW-0963">Cytoplasm</keyword>
<keyword id="KW-0342">GTP-binding</keyword>
<keyword id="KW-0547">Nucleotide-binding</keyword>
<keyword id="KW-1185">Reference proteome</keyword>
<reference key="1">
    <citation type="submission" date="2001-02" db="EMBL/GenBank/DDBJ databases">
        <title>Isolation of full-length cDNA clones from macaque brain cDNA libraries.</title>
        <authorList>
            <person name="Osada N."/>
            <person name="Hida M."/>
            <person name="Kusuda J."/>
            <person name="Tanuma R."/>
            <person name="Iseki K."/>
            <person name="Hirai M."/>
            <person name="Terao K."/>
            <person name="Suzuki Y."/>
            <person name="Sugano S."/>
            <person name="Hashimoto K."/>
        </authorList>
    </citation>
    <scope>NUCLEOTIDE SEQUENCE [LARGE SCALE MRNA]</scope>
    <source>
        <tissue>Frontal cortex</tissue>
    </source>
</reference>